<organism>
    <name type="scientific">Staphylococcus aureus (strain Mu3 / ATCC 700698)</name>
    <dbReference type="NCBI Taxonomy" id="418127"/>
    <lineage>
        <taxon>Bacteria</taxon>
        <taxon>Bacillati</taxon>
        <taxon>Bacillota</taxon>
        <taxon>Bacilli</taxon>
        <taxon>Bacillales</taxon>
        <taxon>Staphylococcaceae</taxon>
        <taxon>Staphylococcus</taxon>
    </lineage>
</organism>
<dbReference type="EMBL" id="AP009324">
    <property type="protein sequence ID" value="BAF77981.1"/>
    <property type="molecule type" value="Genomic_DNA"/>
</dbReference>
<dbReference type="RefSeq" id="WP_000170603.1">
    <property type="nucleotide sequence ID" value="NC_009782.1"/>
</dbReference>
<dbReference type="SMR" id="A7X113"/>
<dbReference type="KEGG" id="saw:SAHV_1098"/>
<dbReference type="HOGENOM" id="CLU_096059_0_0_9"/>
<dbReference type="Gene3D" id="3.30.930.20">
    <property type="entry name" value="Protein of unknown function DUF1054"/>
    <property type="match status" value="1"/>
</dbReference>
<dbReference type="HAMAP" id="MF_01851">
    <property type="entry name" value="UPF0637"/>
    <property type="match status" value="1"/>
</dbReference>
<dbReference type="InterPro" id="IPR009403">
    <property type="entry name" value="UPF0637"/>
</dbReference>
<dbReference type="InterPro" id="IPR053707">
    <property type="entry name" value="UPF0637_domain_sf"/>
</dbReference>
<dbReference type="Pfam" id="PF06335">
    <property type="entry name" value="DUF1054"/>
    <property type="match status" value="1"/>
</dbReference>
<dbReference type="PIRSF" id="PIRSF021332">
    <property type="entry name" value="DUF1054"/>
    <property type="match status" value="1"/>
</dbReference>
<dbReference type="SUPFAM" id="SSF142913">
    <property type="entry name" value="YktB/PF0168-like"/>
    <property type="match status" value="1"/>
</dbReference>
<comment type="similarity">
    <text evidence="1">Belongs to the UPF0637 family.</text>
</comment>
<feature type="chain" id="PRO_0000348325" description="UPF0637 protein SAHV_1098">
    <location>
        <begin position="1"/>
        <end position="204"/>
    </location>
</feature>
<gene>
    <name type="ordered locus">SAHV_1098</name>
</gene>
<proteinExistence type="inferred from homology"/>
<evidence type="ECO:0000255" key="1">
    <source>
        <dbReference type="HAMAP-Rule" id="MF_01851"/>
    </source>
</evidence>
<sequence>MTKYTFKPKDFKAFNVEGLDARMEALNEYIRPQLHELGEYFSDFFTSQTGETFYPHVAKHARRSVNPPKDTWVAFATSKRGYKMLPHFQIGMFEDQLFVMFGIMHEAKDKATRAKVFERKFKAIQQLPDDYRVCLDHMKPDKPFIKDLTDDDLKEAIQRAINVKKGEFFIARAITPQDKRLKSDKAFIAFLEETFDQFLPFYSA</sequence>
<accession>A7X113</accession>
<name>Y1098_STAA1</name>
<protein>
    <recommendedName>
        <fullName evidence="1">UPF0637 protein SAHV_1098</fullName>
    </recommendedName>
</protein>
<reference key="1">
    <citation type="journal article" date="2008" name="Antimicrob. Agents Chemother.">
        <title>Mutated response regulator graR is responsible for phenotypic conversion of Staphylococcus aureus from heterogeneous vancomycin-intermediate resistance to vancomycin-intermediate resistance.</title>
        <authorList>
            <person name="Neoh H.-M."/>
            <person name="Cui L."/>
            <person name="Yuzawa H."/>
            <person name="Takeuchi F."/>
            <person name="Matsuo M."/>
            <person name="Hiramatsu K."/>
        </authorList>
    </citation>
    <scope>NUCLEOTIDE SEQUENCE [LARGE SCALE GENOMIC DNA]</scope>
    <source>
        <strain>Mu3 / ATCC 700698</strain>
    </source>
</reference>